<name>PDXH_GLOC7</name>
<proteinExistence type="inferred from homology"/>
<accession>B7K9I2</accession>
<organism>
    <name type="scientific">Gloeothece citriformis (strain PCC 7424)</name>
    <name type="common">Cyanothece sp. (strain PCC 7424)</name>
    <dbReference type="NCBI Taxonomy" id="65393"/>
    <lineage>
        <taxon>Bacteria</taxon>
        <taxon>Bacillati</taxon>
        <taxon>Cyanobacteriota</taxon>
        <taxon>Cyanophyceae</taxon>
        <taxon>Oscillatoriophycideae</taxon>
        <taxon>Chroococcales</taxon>
        <taxon>Aphanothecaceae</taxon>
        <taxon>Gloeothece</taxon>
        <taxon>Gloeothece citriformis</taxon>
    </lineage>
</organism>
<feature type="chain" id="PRO_1000186302" description="Pyridoxine/pyridoxamine 5'-phosphate oxidase">
    <location>
        <begin position="1"/>
        <end position="214"/>
    </location>
</feature>
<feature type="binding site" evidence="1">
    <location>
        <begin position="9"/>
        <end position="12"/>
    </location>
    <ligand>
        <name>substrate</name>
    </ligand>
</feature>
<feature type="binding site" evidence="1">
    <location>
        <begin position="62"/>
        <end position="67"/>
    </location>
    <ligand>
        <name>FMN</name>
        <dbReference type="ChEBI" id="CHEBI:58210"/>
    </ligand>
</feature>
<feature type="binding site" evidence="1">
    <location>
        <position position="67"/>
    </location>
    <ligand>
        <name>substrate</name>
    </ligand>
</feature>
<feature type="binding site" evidence="1">
    <location>
        <begin position="77"/>
        <end position="78"/>
    </location>
    <ligand>
        <name>FMN</name>
        <dbReference type="ChEBI" id="CHEBI:58210"/>
    </ligand>
</feature>
<feature type="binding site" evidence="1">
    <location>
        <position position="84"/>
    </location>
    <ligand>
        <name>FMN</name>
        <dbReference type="ChEBI" id="CHEBI:58210"/>
    </ligand>
</feature>
<feature type="binding site" evidence="1">
    <location>
        <position position="106"/>
    </location>
    <ligand>
        <name>FMN</name>
        <dbReference type="ChEBI" id="CHEBI:58210"/>
    </ligand>
</feature>
<feature type="binding site" evidence="1">
    <location>
        <position position="124"/>
    </location>
    <ligand>
        <name>substrate</name>
    </ligand>
</feature>
<feature type="binding site" evidence="1">
    <location>
        <position position="128"/>
    </location>
    <ligand>
        <name>substrate</name>
    </ligand>
</feature>
<feature type="binding site" evidence="1">
    <location>
        <position position="132"/>
    </location>
    <ligand>
        <name>substrate</name>
    </ligand>
</feature>
<feature type="binding site" evidence="1">
    <location>
        <begin position="141"/>
        <end position="142"/>
    </location>
    <ligand>
        <name>FMN</name>
        <dbReference type="ChEBI" id="CHEBI:58210"/>
    </ligand>
</feature>
<feature type="binding site" evidence="1">
    <location>
        <position position="186"/>
    </location>
    <ligand>
        <name>FMN</name>
        <dbReference type="ChEBI" id="CHEBI:58210"/>
    </ligand>
</feature>
<feature type="binding site" evidence="1">
    <location>
        <begin position="192"/>
        <end position="194"/>
    </location>
    <ligand>
        <name>substrate</name>
    </ligand>
</feature>
<feature type="binding site" evidence="1">
    <location>
        <position position="196"/>
    </location>
    <ligand>
        <name>FMN</name>
        <dbReference type="ChEBI" id="CHEBI:58210"/>
    </ligand>
</feature>
<keyword id="KW-0285">Flavoprotein</keyword>
<keyword id="KW-0288">FMN</keyword>
<keyword id="KW-0560">Oxidoreductase</keyword>
<keyword id="KW-0664">Pyridoxine biosynthesis</keyword>
<keyword id="KW-1185">Reference proteome</keyword>
<dbReference type="EC" id="1.4.3.5" evidence="1"/>
<dbReference type="EMBL" id="CP001291">
    <property type="protein sequence ID" value="ACK69950.1"/>
    <property type="molecule type" value="Genomic_DNA"/>
</dbReference>
<dbReference type="RefSeq" id="WP_012598895.1">
    <property type="nucleotide sequence ID" value="NC_011729.1"/>
</dbReference>
<dbReference type="SMR" id="B7K9I2"/>
<dbReference type="STRING" id="65393.PCC7424_1509"/>
<dbReference type="KEGG" id="cyc:PCC7424_1509"/>
<dbReference type="eggNOG" id="COG0259">
    <property type="taxonomic scope" value="Bacteria"/>
</dbReference>
<dbReference type="HOGENOM" id="CLU_032263_2_2_3"/>
<dbReference type="OrthoDB" id="9780392at2"/>
<dbReference type="UniPathway" id="UPA01068">
    <property type="reaction ID" value="UER00304"/>
</dbReference>
<dbReference type="UniPathway" id="UPA01068">
    <property type="reaction ID" value="UER00305"/>
</dbReference>
<dbReference type="Proteomes" id="UP000002384">
    <property type="component" value="Chromosome"/>
</dbReference>
<dbReference type="GO" id="GO:0010181">
    <property type="term" value="F:FMN binding"/>
    <property type="evidence" value="ECO:0007669"/>
    <property type="project" value="UniProtKB-UniRule"/>
</dbReference>
<dbReference type="GO" id="GO:0004733">
    <property type="term" value="F:pyridoxamine phosphate oxidase activity"/>
    <property type="evidence" value="ECO:0007669"/>
    <property type="project" value="UniProtKB-UniRule"/>
</dbReference>
<dbReference type="GO" id="GO:0008615">
    <property type="term" value="P:pyridoxine biosynthetic process"/>
    <property type="evidence" value="ECO:0007669"/>
    <property type="project" value="UniProtKB-KW"/>
</dbReference>
<dbReference type="FunFam" id="2.30.110.10:FF:000005">
    <property type="entry name" value="NAD(P)H-hydrate epimerase"/>
    <property type="match status" value="1"/>
</dbReference>
<dbReference type="Gene3D" id="2.30.110.10">
    <property type="entry name" value="Electron Transport, Fmn-binding Protein, Chain A"/>
    <property type="match status" value="1"/>
</dbReference>
<dbReference type="HAMAP" id="MF_01629">
    <property type="entry name" value="PdxH"/>
    <property type="match status" value="1"/>
</dbReference>
<dbReference type="InterPro" id="IPR000659">
    <property type="entry name" value="Pyridox_Oxase"/>
</dbReference>
<dbReference type="InterPro" id="IPR019740">
    <property type="entry name" value="Pyridox_Oxase_CS"/>
</dbReference>
<dbReference type="InterPro" id="IPR011576">
    <property type="entry name" value="Pyridox_Oxase_N"/>
</dbReference>
<dbReference type="InterPro" id="IPR019576">
    <property type="entry name" value="Pyridoxamine_oxidase_dimer_C"/>
</dbReference>
<dbReference type="InterPro" id="IPR012349">
    <property type="entry name" value="Split_barrel_FMN-bd"/>
</dbReference>
<dbReference type="NCBIfam" id="TIGR00558">
    <property type="entry name" value="pdxH"/>
    <property type="match status" value="1"/>
</dbReference>
<dbReference type="NCBIfam" id="NF004231">
    <property type="entry name" value="PRK05679.1"/>
    <property type="match status" value="1"/>
</dbReference>
<dbReference type="PANTHER" id="PTHR10851:SF0">
    <property type="entry name" value="PYRIDOXINE-5'-PHOSPHATE OXIDASE"/>
    <property type="match status" value="1"/>
</dbReference>
<dbReference type="PANTHER" id="PTHR10851">
    <property type="entry name" value="PYRIDOXINE-5-PHOSPHATE OXIDASE"/>
    <property type="match status" value="1"/>
</dbReference>
<dbReference type="Pfam" id="PF10590">
    <property type="entry name" value="PNP_phzG_C"/>
    <property type="match status" value="1"/>
</dbReference>
<dbReference type="Pfam" id="PF01243">
    <property type="entry name" value="PNPOx_N"/>
    <property type="match status" value="1"/>
</dbReference>
<dbReference type="PIRSF" id="PIRSF000190">
    <property type="entry name" value="Pyd_amn-ph_oxd"/>
    <property type="match status" value="1"/>
</dbReference>
<dbReference type="SUPFAM" id="SSF50475">
    <property type="entry name" value="FMN-binding split barrel"/>
    <property type="match status" value="1"/>
</dbReference>
<dbReference type="PROSITE" id="PS01064">
    <property type="entry name" value="PYRIDOX_OXIDASE"/>
    <property type="match status" value="1"/>
</dbReference>
<sequence length="214" mass="25069">MDQSIADLRKNYTLTGLTEAEANPNPFVQFRLWFNQALEAQFLEPNAMTIATVTPDGKPSARMVLLKDFDERGFVFYTNYDSAKGQQLAQTPWAALVFWWDALERQVRIEGTVEKVSQEESDAYFASRPWESRLGAWVSDQSRVIESREVLENRLQALKDKYQAQDVPRPPHWGGFRVMPEKIEFWQGRPNRLHDRLCYKWIEGEKWIIERLSP</sequence>
<protein>
    <recommendedName>
        <fullName evidence="1">Pyridoxine/pyridoxamine 5'-phosphate oxidase</fullName>
        <ecNumber evidence="1">1.4.3.5</ecNumber>
    </recommendedName>
    <alternativeName>
        <fullName evidence="1">PNP/PMP oxidase</fullName>
        <shortName evidence="1">PNPOx</shortName>
    </alternativeName>
    <alternativeName>
        <fullName evidence="1">Pyridoxal 5'-phosphate synthase</fullName>
    </alternativeName>
</protein>
<evidence type="ECO:0000255" key="1">
    <source>
        <dbReference type="HAMAP-Rule" id="MF_01629"/>
    </source>
</evidence>
<gene>
    <name evidence="1" type="primary">pdxH</name>
    <name type="ordered locus">PCC7424_1509</name>
</gene>
<reference key="1">
    <citation type="journal article" date="2011" name="MBio">
        <title>Novel metabolic attributes of the genus Cyanothece, comprising a group of unicellular nitrogen-fixing Cyanobacteria.</title>
        <authorList>
            <person name="Bandyopadhyay A."/>
            <person name="Elvitigala T."/>
            <person name="Welsh E."/>
            <person name="Stockel J."/>
            <person name="Liberton M."/>
            <person name="Min H."/>
            <person name="Sherman L.A."/>
            <person name="Pakrasi H.B."/>
        </authorList>
    </citation>
    <scope>NUCLEOTIDE SEQUENCE [LARGE SCALE GENOMIC DNA]</scope>
    <source>
        <strain>PCC 7424</strain>
    </source>
</reference>
<comment type="function">
    <text evidence="1">Catalyzes the oxidation of either pyridoxine 5'-phosphate (PNP) or pyridoxamine 5'-phosphate (PMP) into pyridoxal 5'-phosphate (PLP).</text>
</comment>
<comment type="catalytic activity">
    <reaction evidence="1">
        <text>pyridoxamine 5'-phosphate + O2 + H2O = pyridoxal 5'-phosphate + H2O2 + NH4(+)</text>
        <dbReference type="Rhea" id="RHEA:15817"/>
        <dbReference type="ChEBI" id="CHEBI:15377"/>
        <dbReference type="ChEBI" id="CHEBI:15379"/>
        <dbReference type="ChEBI" id="CHEBI:16240"/>
        <dbReference type="ChEBI" id="CHEBI:28938"/>
        <dbReference type="ChEBI" id="CHEBI:58451"/>
        <dbReference type="ChEBI" id="CHEBI:597326"/>
        <dbReference type="EC" id="1.4.3.5"/>
    </reaction>
</comment>
<comment type="catalytic activity">
    <reaction evidence="1">
        <text>pyridoxine 5'-phosphate + O2 = pyridoxal 5'-phosphate + H2O2</text>
        <dbReference type="Rhea" id="RHEA:15149"/>
        <dbReference type="ChEBI" id="CHEBI:15379"/>
        <dbReference type="ChEBI" id="CHEBI:16240"/>
        <dbReference type="ChEBI" id="CHEBI:58589"/>
        <dbReference type="ChEBI" id="CHEBI:597326"/>
        <dbReference type="EC" id="1.4.3.5"/>
    </reaction>
</comment>
<comment type="cofactor">
    <cofactor evidence="1">
        <name>FMN</name>
        <dbReference type="ChEBI" id="CHEBI:58210"/>
    </cofactor>
    <text evidence="1">Binds 1 FMN per subunit.</text>
</comment>
<comment type="pathway">
    <text evidence="1">Cofactor metabolism; pyridoxal 5'-phosphate salvage; pyridoxal 5'-phosphate from pyridoxamine 5'-phosphate: step 1/1.</text>
</comment>
<comment type="pathway">
    <text evidence="1">Cofactor metabolism; pyridoxal 5'-phosphate salvage; pyridoxal 5'-phosphate from pyridoxine 5'-phosphate: step 1/1.</text>
</comment>
<comment type="subunit">
    <text evidence="1">Homodimer.</text>
</comment>
<comment type="similarity">
    <text evidence="1">Belongs to the pyridoxamine 5'-phosphate oxidase family.</text>
</comment>